<keyword id="KW-0460">Magnesium</keyword>
<keyword id="KW-0479">Metal-binding</keyword>
<keyword id="KW-0784">Thiamine biosynthesis</keyword>
<keyword id="KW-0808">Transferase</keyword>
<dbReference type="EC" id="2.5.1.3" evidence="1"/>
<dbReference type="EMBL" id="CP001336">
    <property type="protein sequence ID" value="ACL20548.1"/>
    <property type="molecule type" value="Genomic_DNA"/>
</dbReference>
<dbReference type="RefSeq" id="WP_015944076.1">
    <property type="nucleotide sequence ID" value="NC_011830.1"/>
</dbReference>
<dbReference type="SMR" id="B8FUD4"/>
<dbReference type="KEGG" id="dhd:Dhaf_2520"/>
<dbReference type="HOGENOM" id="CLU_018272_3_2_9"/>
<dbReference type="UniPathway" id="UPA00060">
    <property type="reaction ID" value="UER00141"/>
</dbReference>
<dbReference type="Proteomes" id="UP000007726">
    <property type="component" value="Chromosome"/>
</dbReference>
<dbReference type="GO" id="GO:0005737">
    <property type="term" value="C:cytoplasm"/>
    <property type="evidence" value="ECO:0007669"/>
    <property type="project" value="TreeGrafter"/>
</dbReference>
<dbReference type="GO" id="GO:0000287">
    <property type="term" value="F:magnesium ion binding"/>
    <property type="evidence" value="ECO:0007669"/>
    <property type="project" value="UniProtKB-UniRule"/>
</dbReference>
<dbReference type="GO" id="GO:0004789">
    <property type="term" value="F:thiamine-phosphate diphosphorylase activity"/>
    <property type="evidence" value="ECO:0007669"/>
    <property type="project" value="UniProtKB-UniRule"/>
</dbReference>
<dbReference type="GO" id="GO:0009228">
    <property type="term" value="P:thiamine biosynthetic process"/>
    <property type="evidence" value="ECO:0007669"/>
    <property type="project" value="UniProtKB-KW"/>
</dbReference>
<dbReference type="GO" id="GO:0009229">
    <property type="term" value="P:thiamine diphosphate biosynthetic process"/>
    <property type="evidence" value="ECO:0007669"/>
    <property type="project" value="UniProtKB-UniRule"/>
</dbReference>
<dbReference type="CDD" id="cd00564">
    <property type="entry name" value="TMP_TenI"/>
    <property type="match status" value="1"/>
</dbReference>
<dbReference type="FunFam" id="3.20.20.70:FF:000096">
    <property type="entry name" value="Thiamine-phosphate synthase"/>
    <property type="match status" value="1"/>
</dbReference>
<dbReference type="Gene3D" id="3.20.20.70">
    <property type="entry name" value="Aldolase class I"/>
    <property type="match status" value="1"/>
</dbReference>
<dbReference type="HAMAP" id="MF_00097">
    <property type="entry name" value="TMP_synthase"/>
    <property type="match status" value="1"/>
</dbReference>
<dbReference type="InterPro" id="IPR013785">
    <property type="entry name" value="Aldolase_TIM"/>
</dbReference>
<dbReference type="InterPro" id="IPR036206">
    <property type="entry name" value="ThiamineP_synth_sf"/>
</dbReference>
<dbReference type="InterPro" id="IPR022998">
    <property type="entry name" value="ThiamineP_synth_TenI"/>
</dbReference>
<dbReference type="InterPro" id="IPR034291">
    <property type="entry name" value="TMP_synthase"/>
</dbReference>
<dbReference type="NCBIfam" id="TIGR00693">
    <property type="entry name" value="thiE"/>
    <property type="match status" value="1"/>
</dbReference>
<dbReference type="PANTHER" id="PTHR20857:SF23">
    <property type="entry name" value="THIAMINE BIOSYNTHETIC BIFUNCTIONAL ENZYME"/>
    <property type="match status" value="1"/>
</dbReference>
<dbReference type="PANTHER" id="PTHR20857">
    <property type="entry name" value="THIAMINE-PHOSPHATE PYROPHOSPHORYLASE"/>
    <property type="match status" value="1"/>
</dbReference>
<dbReference type="Pfam" id="PF02581">
    <property type="entry name" value="TMP-TENI"/>
    <property type="match status" value="1"/>
</dbReference>
<dbReference type="SUPFAM" id="SSF51391">
    <property type="entry name" value="Thiamin phosphate synthase"/>
    <property type="match status" value="1"/>
</dbReference>
<protein>
    <recommendedName>
        <fullName evidence="1">Thiamine-phosphate synthase</fullName>
        <shortName evidence="1">TP synthase</shortName>
        <shortName evidence="1">TPS</shortName>
        <ecNumber evidence="1">2.5.1.3</ecNumber>
    </recommendedName>
    <alternativeName>
        <fullName evidence="1">Thiamine-phosphate pyrophosphorylase</fullName>
        <shortName evidence="1">TMP pyrophosphorylase</shortName>
        <shortName evidence="1">TMP-PPase</shortName>
    </alternativeName>
</protein>
<accession>B8FUD4</accession>
<proteinExistence type="inferred from homology"/>
<sequence length="207" mass="21878">MAVDYSLYLVTDRILVGPKDFLLSIRKALEGGVTLLQLREKETNSREFYDIGVKVKELAAEFGVPLIINDRVDLALALDADGVHVGQQDLPLAKVRNIIGPDKILGYSVSSLEEALQGERMGADYLGAGPVFPTGSKKDAAEAIGLAKLKEIKAGVSLPVVGIGGIGAANLRVVKETGIDGVSVISAILSQEDPCAAAKGLVDLWRN</sequence>
<feature type="chain" id="PRO_1000198078" description="Thiamine-phosphate synthase">
    <location>
        <begin position="1"/>
        <end position="207"/>
    </location>
</feature>
<feature type="binding site" evidence="1">
    <location>
        <begin position="37"/>
        <end position="41"/>
    </location>
    <ligand>
        <name>4-amino-2-methyl-5-(diphosphooxymethyl)pyrimidine</name>
        <dbReference type="ChEBI" id="CHEBI:57841"/>
    </ligand>
</feature>
<feature type="binding site" evidence="1">
    <location>
        <position position="69"/>
    </location>
    <ligand>
        <name>4-amino-2-methyl-5-(diphosphooxymethyl)pyrimidine</name>
        <dbReference type="ChEBI" id="CHEBI:57841"/>
    </ligand>
</feature>
<feature type="binding site" evidence="1">
    <location>
        <position position="70"/>
    </location>
    <ligand>
        <name>Mg(2+)</name>
        <dbReference type="ChEBI" id="CHEBI:18420"/>
    </ligand>
</feature>
<feature type="binding site" evidence="1">
    <location>
        <position position="89"/>
    </location>
    <ligand>
        <name>Mg(2+)</name>
        <dbReference type="ChEBI" id="CHEBI:18420"/>
    </ligand>
</feature>
<feature type="binding site" evidence="1">
    <location>
        <position position="108"/>
    </location>
    <ligand>
        <name>4-amino-2-methyl-5-(diphosphooxymethyl)pyrimidine</name>
        <dbReference type="ChEBI" id="CHEBI:57841"/>
    </ligand>
</feature>
<feature type="binding site" evidence="1">
    <location>
        <begin position="134"/>
        <end position="136"/>
    </location>
    <ligand>
        <name>2-[(2R,5Z)-2-carboxy-4-methylthiazol-5(2H)-ylidene]ethyl phosphate</name>
        <dbReference type="ChEBI" id="CHEBI:62899"/>
    </ligand>
</feature>
<feature type="binding site" evidence="1">
    <location>
        <position position="137"/>
    </location>
    <ligand>
        <name>4-amino-2-methyl-5-(diphosphooxymethyl)pyrimidine</name>
        <dbReference type="ChEBI" id="CHEBI:57841"/>
    </ligand>
</feature>
<feature type="binding site" evidence="1">
    <location>
        <position position="165"/>
    </location>
    <ligand>
        <name>2-[(2R,5Z)-2-carboxy-4-methylthiazol-5(2H)-ylidene]ethyl phosphate</name>
        <dbReference type="ChEBI" id="CHEBI:62899"/>
    </ligand>
</feature>
<feature type="binding site" evidence="1">
    <location>
        <begin position="185"/>
        <end position="186"/>
    </location>
    <ligand>
        <name>2-[(2R,5Z)-2-carboxy-4-methylthiazol-5(2H)-ylidene]ethyl phosphate</name>
        <dbReference type="ChEBI" id="CHEBI:62899"/>
    </ligand>
</feature>
<comment type="function">
    <text evidence="1">Condenses 4-methyl-5-(beta-hydroxyethyl)thiazole monophosphate (THZ-P) and 2-methyl-4-amino-5-hydroxymethyl pyrimidine pyrophosphate (HMP-PP) to form thiamine monophosphate (TMP).</text>
</comment>
<comment type="catalytic activity">
    <reaction evidence="1">
        <text>2-[(2R,5Z)-2-carboxy-4-methylthiazol-5(2H)-ylidene]ethyl phosphate + 4-amino-2-methyl-5-(diphosphooxymethyl)pyrimidine + 2 H(+) = thiamine phosphate + CO2 + diphosphate</text>
        <dbReference type="Rhea" id="RHEA:47844"/>
        <dbReference type="ChEBI" id="CHEBI:15378"/>
        <dbReference type="ChEBI" id="CHEBI:16526"/>
        <dbReference type="ChEBI" id="CHEBI:33019"/>
        <dbReference type="ChEBI" id="CHEBI:37575"/>
        <dbReference type="ChEBI" id="CHEBI:57841"/>
        <dbReference type="ChEBI" id="CHEBI:62899"/>
        <dbReference type="EC" id="2.5.1.3"/>
    </reaction>
</comment>
<comment type="catalytic activity">
    <reaction evidence="1">
        <text>2-(2-carboxy-4-methylthiazol-5-yl)ethyl phosphate + 4-amino-2-methyl-5-(diphosphooxymethyl)pyrimidine + 2 H(+) = thiamine phosphate + CO2 + diphosphate</text>
        <dbReference type="Rhea" id="RHEA:47848"/>
        <dbReference type="ChEBI" id="CHEBI:15378"/>
        <dbReference type="ChEBI" id="CHEBI:16526"/>
        <dbReference type="ChEBI" id="CHEBI:33019"/>
        <dbReference type="ChEBI" id="CHEBI:37575"/>
        <dbReference type="ChEBI" id="CHEBI:57841"/>
        <dbReference type="ChEBI" id="CHEBI:62890"/>
        <dbReference type="EC" id="2.5.1.3"/>
    </reaction>
</comment>
<comment type="catalytic activity">
    <reaction evidence="1">
        <text>4-methyl-5-(2-phosphooxyethyl)-thiazole + 4-amino-2-methyl-5-(diphosphooxymethyl)pyrimidine + H(+) = thiamine phosphate + diphosphate</text>
        <dbReference type="Rhea" id="RHEA:22328"/>
        <dbReference type="ChEBI" id="CHEBI:15378"/>
        <dbReference type="ChEBI" id="CHEBI:33019"/>
        <dbReference type="ChEBI" id="CHEBI:37575"/>
        <dbReference type="ChEBI" id="CHEBI:57841"/>
        <dbReference type="ChEBI" id="CHEBI:58296"/>
        <dbReference type="EC" id="2.5.1.3"/>
    </reaction>
</comment>
<comment type="cofactor">
    <cofactor evidence="1">
        <name>Mg(2+)</name>
        <dbReference type="ChEBI" id="CHEBI:18420"/>
    </cofactor>
    <text evidence="1">Binds 1 Mg(2+) ion per subunit.</text>
</comment>
<comment type="pathway">
    <text evidence="1">Cofactor biosynthesis; thiamine diphosphate biosynthesis; thiamine phosphate from 4-amino-2-methyl-5-diphosphomethylpyrimidine and 4-methyl-5-(2-phosphoethyl)-thiazole: step 1/1.</text>
</comment>
<comment type="similarity">
    <text evidence="1">Belongs to the thiamine-phosphate synthase family.</text>
</comment>
<name>THIE_DESHD</name>
<evidence type="ECO:0000255" key="1">
    <source>
        <dbReference type="HAMAP-Rule" id="MF_00097"/>
    </source>
</evidence>
<gene>
    <name evidence="1" type="primary">thiE</name>
    <name type="ordered locus">Dhaf_2520</name>
</gene>
<reference key="1">
    <citation type="journal article" date="2012" name="BMC Microbiol.">
        <title>Genome sequence of Desulfitobacterium hafniense DCB-2, a Gram-positive anaerobe capable of dehalogenation and metal reduction.</title>
        <authorList>
            <person name="Kim S.H."/>
            <person name="Harzman C."/>
            <person name="Davis J.K."/>
            <person name="Hutcheson R."/>
            <person name="Broderick J.B."/>
            <person name="Marsh T.L."/>
            <person name="Tiedje J.M."/>
        </authorList>
    </citation>
    <scope>NUCLEOTIDE SEQUENCE [LARGE SCALE GENOMIC DNA]</scope>
    <source>
        <strain>DSM 10664 / DCB-2</strain>
    </source>
</reference>
<organism>
    <name type="scientific">Desulfitobacterium hafniense (strain DSM 10664 / DCB-2)</name>
    <dbReference type="NCBI Taxonomy" id="272564"/>
    <lineage>
        <taxon>Bacteria</taxon>
        <taxon>Bacillati</taxon>
        <taxon>Bacillota</taxon>
        <taxon>Clostridia</taxon>
        <taxon>Eubacteriales</taxon>
        <taxon>Desulfitobacteriaceae</taxon>
        <taxon>Desulfitobacterium</taxon>
    </lineage>
</organism>